<protein>
    <recommendedName>
        <fullName evidence="1">HPr kinase/phosphorylase</fullName>
        <shortName evidence="1">HPrK/P</shortName>
        <ecNumber evidence="1">2.7.11.-</ecNumber>
        <ecNumber evidence="1">2.7.4.-</ecNumber>
    </recommendedName>
    <alternativeName>
        <fullName evidence="1">HPr(Ser) kinase/phosphorylase</fullName>
    </alternativeName>
</protein>
<evidence type="ECO:0000255" key="1">
    <source>
        <dbReference type="HAMAP-Rule" id="MF_01249"/>
    </source>
</evidence>
<name>HPRK_STRT1</name>
<reference key="1">
    <citation type="journal article" date="2004" name="Nat. Biotechnol.">
        <title>Complete sequence and comparative genome analysis of the dairy bacterium Streptococcus thermophilus.</title>
        <authorList>
            <person name="Bolotin A."/>
            <person name="Quinquis B."/>
            <person name="Renault P."/>
            <person name="Sorokin A."/>
            <person name="Ehrlich S.D."/>
            <person name="Kulakauskas S."/>
            <person name="Lapidus A."/>
            <person name="Goltsman E."/>
            <person name="Mazur M."/>
            <person name="Pusch G.D."/>
            <person name="Fonstein M."/>
            <person name="Overbeek R."/>
            <person name="Kyprides N."/>
            <person name="Purnelle B."/>
            <person name="Prozzi D."/>
            <person name="Ngui K."/>
            <person name="Masuy D."/>
            <person name="Hancy F."/>
            <person name="Burteau S."/>
            <person name="Boutry M."/>
            <person name="Delcour J."/>
            <person name="Goffeau A."/>
            <person name="Hols P."/>
        </authorList>
    </citation>
    <scope>NUCLEOTIDE SEQUENCE [LARGE SCALE GENOMIC DNA]</scope>
    <source>
        <strain>CNRZ 1066</strain>
    </source>
</reference>
<comment type="function">
    <text evidence="1">Catalyzes the ATP- as well as the pyrophosphate-dependent phosphorylation of a specific serine residue in HPr, a phosphocarrier protein of the phosphoenolpyruvate-dependent sugar phosphotransferase system (PTS). HprK/P also catalyzes the pyrophosphate-producing, inorganic phosphate-dependent dephosphorylation (phosphorolysis) of seryl-phosphorylated HPr (P-Ser-HPr). The two antagonistic activities of HprK/P are regulated by several intracellular metabolites, which change their concentration in response to the absence or presence of rapidly metabolisable carbon sources (glucose, fructose, etc.) in the growth medium. Therefore, by controlling the phosphorylation state of HPr, HPrK/P is a sensor enzyme that plays a major role in the regulation of carbon metabolism and sugar transport: it mediates carbon catabolite repression (CCR), and regulates PTS-catalyzed carbohydrate uptake and inducer exclusion.</text>
</comment>
<comment type="catalytic activity">
    <reaction evidence="1">
        <text>[HPr protein]-L-serine + ATP = [HPr protein]-O-phospho-L-serine + ADP + H(+)</text>
        <dbReference type="Rhea" id="RHEA:46600"/>
        <dbReference type="Rhea" id="RHEA-COMP:11602"/>
        <dbReference type="Rhea" id="RHEA-COMP:11603"/>
        <dbReference type="ChEBI" id="CHEBI:15378"/>
        <dbReference type="ChEBI" id="CHEBI:29999"/>
        <dbReference type="ChEBI" id="CHEBI:30616"/>
        <dbReference type="ChEBI" id="CHEBI:83421"/>
        <dbReference type="ChEBI" id="CHEBI:456216"/>
    </reaction>
</comment>
<comment type="catalytic activity">
    <reaction evidence="1">
        <text>[HPr protein]-O-phospho-L-serine + phosphate + H(+) = [HPr protein]-L-serine + diphosphate</text>
        <dbReference type="Rhea" id="RHEA:46604"/>
        <dbReference type="Rhea" id="RHEA-COMP:11602"/>
        <dbReference type="Rhea" id="RHEA-COMP:11603"/>
        <dbReference type="ChEBI" id="CHEBI:15378"/>
        <dbReference type="ChEBI" id="CHEBI:29999"/>
        <dbReference type="ChEBI" id="CHEBI:33019"/>
        <dbReference type="ChEBI" id="CHEBI:43474"/>
        <dbReference type="ChEBI" id="CHEBI:83421"/>
    </reaction>
</comment>
<comment type="cofactor">
    <cofactor evidence="1">
        <name>Mg(2+)</name>
        <dbReference type="ChEBI" id="CHEBI:18420"/>
    </cofactor>
</comment>
<comment type="subunit">
    <text evidence="1">Homohexamer.</text>
</comment>
<comment type="domain">
    <text evidence="1">The Walker A ATP-binding motif also binds Pi and PPi.</text>
</comment>
<comment type="miscellaneous">
    <text evidence="1">Both phosphorylation and phosphorolysis are carried out by the same active site and suggest a common mechanism for both reactions.</text>
</comment>
<comment type="similarity">
    <text evidence="1">Belongs to the HPrK/P family.</text>
</comment>
<keyword id="KW-0067">ATP-binding</keyword>
<keyword id="KW-0119">Carbohydrate metabolism</keyword>
<keyword id="KW-0418">Kinase</keyword>
<keyword id="KW-0460">Magnesium</keyword>
<keyword id="KW-0479">Metal-binding</keyword>
<keyword id="KW-0511">Multifunctional enzyme</keyword>
<keyword id="KW-0547">Nucleotide-binding</keyword>
<keyword id="KW-0723">Serine/threonine-protein kinase</keyword>
<keyword id="KW-0808">Transferase</keyword>
<dbReference type="EC" id="2.7.11.-" evidence="1"/>
<dbReference type="EC" id="2.7.4.-" evidence="1"/>
<dbReference type="EMBL" id="CP000024">
    <property type="protein sequence ID" value="AAV62262.1"/>
    <property type="molecule type" value="Genomic_DNA"/>
</dbReference>
<dbReference type="RefSeq" id="WP_011227035.1">
    <property type="nucleotide sequence ID" value="NC_006449.1"/>
</dbReference>
<dbReference type="SMR" id="Q5M0J7"/>
<dbReference type="GeneID" id="66898575"/>
<dbReference type="KEGG" id="stc:str0666"/>
<dbReference type="HOGENOM" id="CLU_052030_0_1_9"/>
<dbReference type="GO" id="GO:0005524">
    <property type="term" value="F:ATP binding"/>
    <property type="evidence" value="ECO:0007669"/>
    <property type="project" value="UniProtKB-UniRule"/>
</dbReference>
<dbReference type="GO" id="GO:0000287">
    <property type="term" value="F:magnesium ion binding"/>
    <property type="evidence" value="ECO:0007669"/>
    <property type="project" value="UniProtKB-UniRule"/>
</dbReference>
<dbReference type="GO" id="GO:0000155">
    <property type="term" value="F:phosphorelay sensor kinase activity"/>
    <property type="evidence" value="ECO:0007669"/>
    <property type="project" value="InterPro"/>
</dbReference>
<dbReference type="GO" id="GO:0004674">
    <property type="term" value="F:protein serine/threonine kinase activity"/>
    <property type="evidence" value="ECO:0007669"/>
    <property type="project" value="UniProtKB-KW"/>
</dbReference>
<dbReference type="GO" id="GO:0004712">
    <property type="term" value="F:protein serine/threonine/tyrosine kinase activity"/>
    <property type="evidence" value="ECO:0007669"/>
    <property type="project" value="UniProtKB-UniRule"/>
</dbReference>
<dbReference type="GO" id="GO:0006109">
    <property type="term" value="P:regulation of carbohydrate metabolic process"/>
    <property type="evidence" value="ECO:0007669"/>
    <property type="project" value="UniProtKB-UniRule"/>
</dbReference>
<dbReference type="CDD" id="cd01918">
    <property type="entry name" value="HprK_C"/>
    <property type="match status" value="1"/>
</dbReference>
<dbReference type="FunFam" id="3.40.50.300:FF:000174">
    <property type="entry name" value="HPr kinase/phosphorylase"/>
    <property type="match status" value="1"/>
</dbReference>
<dbReference type="Gene3D" id="3.40.1390.20">
    <property type="entry name" value="HprK N-terminal domain-like"/>
    <property type="match status" value="1"/>
</dbReference>
<dbReference type="Gene3D" id="3.40.50.300">
    <property type="entry name" value="P-loop containing nucleotide triphosphate hydrolases"/>
    <property type="match status" value="1"/>
</dbReference>
<dbReference type="HAMAP" id="MF_01249">
    <property type="entry name" value="HPr_kinase"/>
    <property type="match status" value="1"/>
</dbReference>
<dbReference type="InterPro" id="IPR003755">
    <property type="entry name" value="HPr(Ser)_kin/Pase"/>
</dbReference>
<dbReference type="InterPro" id="IPR011104">
    <property type="entry name" value="Hpr_kin/Pase_C"/>
</dbReference>
<dbReference type="InterPro" id="IPR011126">
    <property type="entry name" value="Hpr_kin/Pase_Hpr_N"/>
</dbReference>
<dbReference type="InterPro" id="IPR027417">
    <property type="entry name" value="P-loop_NTPase"/>
</dbReference>
<dbReference type="InterPro" id="IPR028979">
    <property type="entry name" value="Ser_kin/Pase_Hpr-like_N_sf"/>
</dbReference>
<dbReference type="NCBIfam" id="TIGR00679">
    <property type="entry name" value="hpr-ser"/>
    <property type="match status" value="1"/>
</dbReference>
<dbReference type="PANTHER" id="PTHR30305:SF1">
    <property type="entry name" value="HPR KINASE_PHOSPHORYLASE"/>
    <property type="match status" value="1"/>
</dbReference>
<dbReference type="PANTHER" id="PTHR30305">
    <property type="entry name" value="PROTEIN YJDM-RELATED"/>
    <property type="match status" value="1"/>
</dbReference>
<dbReference type="Pfam" id="PF07475">
    <property type="entry name" value="Hpr_kinase_C"/>
    <property type="match status" value="1"/>
</dbReference>
<dbReference type="Pfam" id="PF02603">
    <property type="entry name" value="Hpr_kinase_N"/>
    <property type="match status" value="1"/>
</dbReference>
<dbReference type="SUPFAM" id="SSF75138">
    <property type="entry name" value="HprK N-terminal domain-like"/>
    <property type="match status" value="1"/>
</dbReference>
<dbReference type="SUPFAM" id="SSF53795">
    <property type="entry name" value="PEP carboxykinase-like"/>
    <property type="match status" value="1"/>
</dbReference>
<sequence>MTVTVKMLVDKLKLKVVYGNEELLAKAITTADISRPGLEMAGYFDYYSPERLQLVGMKEWTYLKTMTANNRYSVFANIFREETPAVIVARGLEIPEEMLQAAKENGVAVLQGRNSTSSLSGDMSWYLNSQLAERTSVHGVLVDIYGMGVLIQGDSGIGKSETALELVKRGHRLVADDRVDVYAKDEGTLWGEPAEILLHLLEIRGVGIIDVMSLYGASAVRDSSQVQLCICLEHFENDEVFDRLGNSNEEIELQGVKIPRIRIPVKTGRNVSVVIEAAAMNYRAKQMGYDATKTFKDRLTDLISKNGED</sequence>
<proteinExistence type="inferred from homology"/>
<gene>
    <name evidence="1" type="primary">hprK</name>
    <name type="ordered locus">str0666</name>
</gene>
<feature type="chain" id="PRO_1000067178" description="HPr kinase/phosphorylase">
    <location>
        <begin position="1"/>
        <end position="309"/>
    </location>
</feature>
<feature type="region of interest" description="Important for the catalytic mechanism of both phosphorylation and dephosphorylation" evidence="1">
    <location>
        <begin position="201"/>
        <end position="210"/>
    </location>
</feature>
<feature type="region of interest" description="Important for the catalytic mechanism of dephosphorylation" evidence="1">
    <location>
        <begin position="264"/>
        <end position="269"/>
    </location>
</feature>
<feature type="active site" evidence="1">
    <location>
        <position position="138"/>
    </location>
</feature>
<feature type="active site" evidence="1">
    <location>
        <position position="159"/>
    </location>
</feature>
<feature type="active site" description="Proton acceptor; for phosphorylation activity. Proton donor; for dephosphorylation activity" evidence="1">
    <location>
        <position position="177"/>
    </location>
</feature>
<feature type="active site" evidence="1">
    <location>
        <position position="243"/>
    </location>
</feature>
<feature type="binding site" evidence="1">
    <location>
        <begin position="153"/>
        <end position="160"/>
    </location>
    <ligand>
        <name>ATP</name>
        <dbReference type="ChEBI" id="CHEBI:30616"/>
    </ligand>
</feature>
<feature type="binding site" evidence="1">
    <location>
        <position position="160"/>
    </location>
    <ligand>
        <name>Mg(2+)</name>
        <dbReference type="ChEBI" id="CHEBI:18420"/>
    </ligand>
</feature>
<feature type="binding site" evidence="1">
    <location>
        <position position="202"/>
    </location>
    <ligand>
        <name>Mg(2+)</name>
        <dbReference type="ChEBI" id="CHEBI:18420"/>
    </ligand>
</feature>
<organism>
    <name type="scientific">Streptococcus thermophilus (strain CNRZ 1066)</name>
    <dbReference type="NCBI Taxonomy" id="299768"/>
    <lineage>
        <taxon>Bacteria</taxon>
        <taxon>Bacillati</taxon>
        <taxon>Bacillota</taxon>
        <taxon>Bacilli</taxon>
        <taxon>Lactobacillales</taxon>
        <taxon>Streptococcaceae</taxon>
        <taxon>Streptococcus</taxon>
    </lineage>
</organism>
<accession>Q5M0J7</accession>